<organism>
    <name type="scientific">Caenorhabditis elegans</name>
    <dbReference type="NCBI Taxonomy" id="6239"/>
    <lineage>
        <taxon>Eukaryota</taxon>
        <taxon>Metazoa</taxon>
        <taxon>Ecdysozoa</taxon>
        <taxon>Nematoda</taxon>
        <taxon>Chromadorea</taxon>
        <taxon>Rhabditida</taxon>
        <taxon>Rhabditina</taxon>
        <taxon>Rhabditomorpha</taxon>
        <taxon>Rhabditoidea</taxon>
        <taxon>Rhabditidae</taxon>
        <taxon>Peloderinae</taxon>
        <taxon>Caenorhabditis</taxon>
    </lineage>
</organism>
<sequence length="422" mass="48211">MNGKQQVTKKPSTEEDLSFTKFKVVPDVGLKSSQFEFVLGMPINQCIAMIQQHPRMLTKVELKYSKKDPFYQDIIIYIGSTGIRLYFDGLSQLIKLIEVDNLSMITLTYNDTIFSDPNNMATLDRVNEFFGSTHPGSYDDKHNIYVQSWPGLSFCFPYGGENSNLEVRPGFGGNLRSLKYDANSQPKLTKMSIYRGPNPSEPESVDTPFSCYCGQNRTRKVEAIWENGNIVGIDIQFDTQNGRIVDGEYDVSTYTRQIYFGDSVSDVQSILGAPTKVFYKSDDKMKIHRGLHKETLYGPPNFFFNYFVMGLDILFDFVSKRVVKFVLHTNAPGHCDFGMYSRCNFSIFLNDKQYEIRTDSKFDEFSHAFMNDSNPPRPVVLARQEQQPFGSTFCYGIKQIIVERTENGFLTSVTIYDGAKEK</sequence>
<reference key="1">
    <citation type="journal article" date="1990" name="Genes Dev.">
        <title>The Caenorhabditis elegans gene lin-10 is broadly expressed while required specifically for the determination of vulval cell fates.</title>
        <authorList>
            <person name="Kim S.K."/>
            <person name="Horvitz H.R."/>
        </authorList>
    </citation>
    <scope>NUCLEOTIDE SEQUENCE [MRNA] (ISOFORM A)</scope>
    <source>
        <strain>Bristol N2</strain>
    </source>
</reference>
<reference key="2">
    <citation type="journal article" date="1998" name="Science">
        <title>Genome sequence of the nematode C. elegans: a platform for investigating biology.</title>
        <authorList>
            <consortium name="The C. elegans sequencing consortium"/>
        </authorList>
    </citation>
    <scope>NUCLEOTIDE SEQUENCE [LARGE SCALE GENOMIC DNA]</scope>
    <scope>ALTERNATIVE SPLICING</scope>
    <source>
        <strain>Bristol N2</strain>
    </source>
</reference>
<evidence type="ECO:0000250" key="1">
    <source>
        <dbReference type="UniProtKB" id="Q9BSU1"/>
    </source>
</evidence>
<evidence type="ECO:0000305" key="2"/>
<evidence type="ECO:0000305" key="3">
    <source>
    </source>
</evidence>
<dbReference type="EMBL" id="X51321">
    <property type="protein sequence ID" value="CAA35704.1"/>
    <property type="status" value="ALT_INIT"/>
    <property type="molecule type" value="mRNA"/>
</dbReference>
<dbReference type="EMBL" id="Z75713">
    <property type="protein sequence ID" value="CAB00051.2"/>
    <property type="molecule type" value="Genomic_DNA"/>
</dbReference>
<dbReference type="EMBL" id="Z75713">
    <property type="protein sequence ID" value="CAB54301.1"/>
    <property type="molecule type" value="Genomic_DNA"/>
</dbReference>
<dbReference type="PIR" id="A34589">
    <property type="entry name" value="A34589"/>
</dbReference>
<dbReference type="PIR" id="T24321">
    <property type="entry name" value="T24321"/>
</dbReference>
<dbReference type="PIR" id="T24322">
    <property type="entry name" value="T24322"/>
</dbReference>
<dbReference type="RefSeq" id="NP_492252.1">
    <molecule id="P34692-2"/>
    <property type="nucleotide sequence ID" value="NM_059851.6"/>
</dbReference>
<dbReference type="RefSeq" id="NP_740894.1">
    <molecule id="P34692-1"/>
    <property type="nucleotide sequence ID" value="NM_171841.9"/>
</dbReference>
<dbReference type="BioGRID" id="38043">
    <property type="interactions" value="10"/>
</dbReference>
<dbReference type="FunCoup" id="P34692">
    <property type="interactions" value="2562"/>
</dbReference>
<dbReference type="IntAct" id="P34692">
    <property type="interactions" value="5"/>
</dbReference>
<dbReference type="STRING" id="6239.T01G9.2a.1"/>
<dbReference type="iPTMnet" id="P34692"/>
<dbReference type="PaxDb" id="6239-T01G9.2a"/>
<dbReference type="PeptideAtlas" id="P34692"/>
<dbReference type="EnsemblMetazoa" id="T01G9.2a.1">
    <molecule id="P34692-1"/>
    <property type="protein sequence ID" value="T01G9.2a.1"/>
    <property type="gene ID" value="WBGene00011344"/>
</dbReference>
<dbReference type="EnsemblMetazoa" id="T01G9.2b.1">
    <molecule id="P34692-2"/>
    <property type="protein sequence ID" value="T01G9.2b.1"/>
    <property type="gene ID" value="WBGene00011344"/>
</dbReference>
<dbReference type="GeneID" id="172609"/>
<dbReference type="KEGG" id="cel:CELE_T01G9.2"/>
<dbReference type="UCSC" id="T01G9.2b.1">
    <molecule id="P34692-1"/>
    <property type="organism name" value="c. elegans"/>
</dbReference>
<dbReference type="AGR" id="WB:WBGene00011344"/>
<dbReference type="CTD" id="172609"/>
<dbReference type="WormBase" id="T01G9.2a">
    <molecule id="P34692-1"/>
    <property type="protein sequence ID" value="CE27202"/>
    <property type="gene ID" value="WBGene00011344"/>
</dbReference>
<dbReference type="WormBase" id="T01G9.2b">
    <molecule id="P34692-2"/>
    <property type="protein sequence ID" value="CE23937"/>
    <property type="gene ID" value="WBGene00011344"/>
</dbReference>
<dbReference type="eggNOG" id="KOG2819">
    <property type="taxonomic scope" value="Eukaryota"/>
</dbReference>
<dbReference type="GeneTree" id="ENSGT00940000153528"/>
<dbReference type="InParanoid" id="P34692"/>
<dbReference type="OMA" id="YRKNDQK"/>
<dbReference type="OrthoDB" id="3971593at2759"/>
<dbReference type="PhylomeDB" id="P34692"/>
<dbReference type="PRO" id="PR:P34692"/>
<dbReference type="Proteomes" id="UP000001940">
    <property type="component" value="Chromosome I"/>
</dbReference>
<dbReference type="Bgee" id="WBGene00011344">
    <property type="expression patterns" value="Expressed in pharyngeal muscle cell (C elegans) and 4 other cell types or tissues"/>
</dbReference>
<dbReference type="GO" id="GO:0005737">
    <property type="term" value="C:cytoplasm"/>
    <property type="evidence" value="ECO:0007005"/>
    <property type="project" value="WormBase"/>
</dbReference>
<dbReference type="GO" id="GO:0000407">
    <property type="term" value="C:phagophore assembly site"/>
    <property type="evidence" value="ECO:0000250"/>
    <property type="project" value="UniProtKB"/>
</dbReference>
<dbReference type="GO" id="GO:0055120">
    <property type="term" value="C:striated muscle dense body"/>
    <property type="evidence" value="ECO:0007005"/>
    <property type="project" value="WormBase"/>
</dbReference>
<dbReference type="GO" id="GO:0005802">
    <property type="term" value="C:trans-Golgi network"/>
    <property type="evidence" value="ECO:0000318"/>
    <property type="project" value="GO_Central"/>
</dbReference>
<dbReference type="GO" id="GO:0043001">
    <property type="term" value="P:Golgi to plasma membrane protein transport"/>
    <property type="evidence" value="ECO:0000318"/>
    <property type="project" value="GO_Central"/>
</dbReference>
<dbReference type="InterPro" id="IPR005373">
    <property type="entry name" value="PHAF1"/>
</dbReference>
<dbReference type="InterPro" id="IPR039156">
    <property type="entry name" value="PHAF1/BROMI"/>
</dbReference>
<dbReference type="PANTHER" id="PTHR13465:SF2">
    <property type="entry name" value="PHAGOSOME ASSEMBLY FACTOR 1"/>
    <property type="match status" value="1"/>
</dbReference>
<dbReference type="PANTHER" id="PTHR13465">
    <property type="entry name" value="UPF0183 PROTEIN"/>
    <property type="match status" value="1"/>
</dbReference>
<dbReference type="Pfam" id="PF03676">
    <property type="entry name" value="PHAF1"/>
    <property type="match status" value="1"/>
</dbReference>
<keyword id="KW-0025">Alternative splicing</keyword>
<keyword id="KW-0963">Cytoplasm</keyword>
<keyword id="KW-1185">Reference proteome</keyword>
<gene>
    <name type="ORF">T01G9.2</name>
</gene>
<proteinExistence type="evidence at protein level"/>
<protein>
    <recommendedName>
        <fullName>PHAF1 protein T01G9.2</fullName>
    </recommendedName>
</protein>
<accession>P34692</accession>
<accession>Q22076</accession>
<accession>Q9U383</accession>
<name>PHAF1_CAEEL</name>
<comment type="function">
    <text evidence="1">May play a regulatory role in autophagic activity.</text>
</comment>
<comment type="interaction">
    <interactant intactId="EBI-326630">
        <id>P34692</id>
    </interactant>
    <interactant intactId="EBI-325518">
        <id>Q9UAT1</id>
        <label>CELE_D2063.1</label>
    </interactant>
    <organismsDiffer>false</organismsDiffer>
    <experiments>3</experiments>
</comment>
<comment type="interaction">
    <interactant intactId="EBI-326630">
        <id>P34692</id>
    </interactant>
    <interactant intactId="EBI-320916">
        <id>G5EFF2</id>
        <label>CELE_F20C5.6</label>
    </interactant>
    <organismsDiffer>false</organismsDiffer>
    <experiments>3</experiments>
</comment>
<comment type="subcellular location">
    <subcellularLocation>
        <location evidence="1">Cytoplasm</location>
    </subcellularLocation>
    <subcellularLocation>
        <location evidence="1">Preautophagosomal structure</location>
    </subcellularLocation>
    <text evidence="1">The BCAS3:PHAF1 complex is recruited to the preautophagosomal structures adjacent to the damaged mitochondria upon mitophagy in a PRKN-PINK1 dependent manner.</text>
</comment>
<comment type="alternative products">
    <event type="alternative splicing"/>
    <isoform>
        <id>P34692-1</id>
        <name>a</name>
        <sequence type="displayed"/>
    </isoform>
    <isoform>
        <id>P34692-2</id>
        <name>b</name>
        <sequence type="described" ref="VSP_006725"/>
    </isoform>
</comment>
<comment type="similarity">
    <text evidence="2">Belongs to the PHAF1 family.</text>
</comment>
<comment type="caution">
    <text evidence="3">Was originally thought to be lin-10.</text>
</comment>
<comment type="sequence caution" evidence="2">
    <conflict type="erroneous initiation">
        <sequence resource="EMBL-CDS" id="CAA35704"/>
    </conflict>
    <text>Extended N-terminus.</text>
</comment>
<feature type="chain" id="PRO_0000221086" description="PHAF1 protein T01G9.2">
    <location>
        <begin position="1"/>
        <end position="422"/>
    </location>
</feature>
<feature type="splice variant" id="VSP_006725" description="In isoform b." evidence="2">
    <location>
        <begin position="21"/>
        <end position="23"/>
    </location>
</feature>
<feature type="sequence conflict" description="In Ref. 1; CAA35704." evidence="2" ref="1">
    <original>MNGKQQ</original>
    <variation>MMQTA</variation>
    <location>
        <begin position="1"/>
        <end position="6"/>
    </location>
</feature>